<gene>
    <name evidence="1" type="primary">lspA</name>
    <name type="ordered locus">Cj0361</name>
</gene>
<accession>Q0PBE9</accession>
<evidence type="ECO:0000255" key="1">
    <source>
        <dbReference type="HAMAP-Rule" id="MF_00161"/>
    </source>
</evidence>
<sequence length="156" mass="18327">MAKTFKFIFYFWGAFVLVFALDQWVKSLTLAGFRWQSEYLDLTYALNTGVAFSMLSFLEHNLKYLHLALIGVLFIYLFWQRTLLKTHSIAFGMMLGAGVSNLLDRFIHGGVVDMFFWHKWFNFAIFNVADVMINISVALILIQEIFKKRKKDDRMD</sequence>
<keyword id="KW-0064">Aspartyl protease</keyword>
<keyword id="KW-0997">Cell inner membrane</keyword>
<keyword id="KW-1003">Cell membrane</keyword>
<keyword id="KW-0378">Hydrolase</keyword>
<keyword id="KW-0472">Membrane</keyword>
<keyword id="KW-0645">Protease</keyword>
<keyword id="KW-1185">Reference proteome</keyword>
<keyword id="KW-0812">Transmembrane</keyword>
<keyword id="KW-1133">Transmembrane helix</keyword>
<dbReference type="EC" id="3.4.23.36" evidence="1"/>
<dbReference type="EMBL" id="AL111168">
    <property type="protein sequence ID" value="CAL34511.1"/>
    <property type="molecule type" value="Genomic_DNA"/>
</dbReference>
<dbReference type="PIR" id="G81378">
    <property type="entry name" value="G81378"/>
</dbReference>
<dbReference type="RefSeq" id="WP_002858678.1">
    <property type="nucleotide sequence ID" value="NZ_SZUC01000004.1"/>
</dbReference>
<dbReference type="RefSeq" id="YP_002343798.1">
    <property type="nucleotide sequence ID" value="NC_002163.1"/>
</dbReference>
<dbReference type="SMR" id="Q0PBE9"/>
<dbReference type="IntAct" id="Q0PBE9">
    <property type="interactions" value="7"/>
</dbReference>
<dbReference type="STRING" id="192222.Cj0361"/>
<dbReference type="PaxDb" id="192222-Cj0361"/>
<dbReference type="EnsemblBacteria" id="CAL34511">
    <property type="protein sequence ID" value="CAL34511"/>
    <property type="gene ID" value="Cj0361"/>
</dbReference>
<dbReference type="GeneID" id="904684"/>
<dbReference type="KEGG" id="cje:Cj0361"/>
<dbReference type="PATRIC" id="fig|192222.6.peg.352"/>
<dbReference type="eggNOG" id="COG0597">
    <property type="taxonomic scope" value="Bacteria"/>
</dbReference>
<dbReference type="HOGENOM" id="CLU_083252_4_3_7"/>
<dbReference type="OrthoDB" id="9810259at2"/>
<dbReference type="UniPathway" id="UPA00665"/>
<dbReference type="Proteomes" id="UP000000799">
    <property type="component" value="Chromosome"/>
</dbReference>
<dbReference type="GO" id="GO:0005886">
    <property type="term" value="C:plasma membrane"/>
    <property type="evidence" value="ECO:0007669"/>
    <property type="project" value="UniProtKB-SubCell"/>
</dbReference>
<dbReference type="GO" id="GO:0004190">
    <property type="term" value="F:aspartic-type endopeptidase activity"/>
    <property type="evidence" value="ECO:0007669"/>
    <property type="project" value="UniProtKB-UniRule"/>
</dbReference>
<dbReference type="GO" id="GO:0006508">
    <property type="term" value="P:proteolysis"/>
    <property type="evidence" value="ECO:0007669"/>
    <property type="project" value="UniProtKB-KW"/>
</dbReference>
<dbReference type="HAMAP" id="MF_00161">
    <property type="entry name" value="LspA"/>
    <property type="match status" value="1"/>
</dbReference>
<dbReference type="InterPro" id="IPR001872">
    <property type="entry name" value="Peptidase_A8"/>
</dbReference>
<dbReference type="NCBIfam" id="TIGR00077">
    <property type="entry name" value="lspA"/>
    <property type="match status" value="1"/>
</dbReference>
<dbReference type="PANTHER" id="PTHR33695">
    <property type="entry name" value="LIPOPROTEIN SIGNAL PEPTIDASE"/>
    <property type="match status" value="1"/>
</dbReference>
<dbReference type="PANTHER" id="PTHR33695:SF1">
    <property type="entry name" value="LIPOPROTEIN SIGNAL PEPTIDASE"/>
    <property type="match status" value="1"/>
</dbReference>
<dbReference type="Pfam" id="PF01252">
    <property type="entry name" value="Peptidase_A8"/>
    <property type="match status" value="1"/>
</dbReference>
<dbReference type="PRINTS" id="PR00781">
    <property type="entry name" value="LIPOSIGPTASE"/>
</dbReference>
<dbReference type="PROSITE" id="PS00855">
    <property type="entry name" value="SPASE_II"/>
    <property type="match status" value="1"/>
</dbReference>
<name>LSPA_CAMJE</name>
<feature type="chain" id="PRO_1000097243" description="Lipoprotein signal peptidase">
    <location>
        <begin position="1"/>
        <end position="156"/>
    </location>
</feature>
<feature type="transmembrane region" description="Helical" evidence="1">
    <location>
        <begin position="5"/>
        <end position="25"/>
    </location>
</feature>
<feature type="transmembrane region" description="Helical" evidence="1">
    <location>
        <begin position="64"/>
        <end position="84"/>
    </location>
</feature>
<feature type="transmembrane region" description="Helical" evidence="1">
    <location>
        <begin position="89"/>
        <end position="109"/>
    </location>
</feature>
<feature type="transmembrane region" description="Helical" evidence="1">
    <location>
        <begin position="122"/>
        <end position="142"/>
    </location>
</feature>
<feature type="active site" evidence="1">
    <location>
        <position position="113"/>
    </location>
</feature>
<feature type="active site" evidence="1">
    <location>
        <position position="130"/>
    </location>
</feature>
<protein>
    <recommendedName>
        <fullName evidence="1">Lipoprotein signal peptidase</fullName>
        <ecNumber evidence="1">3.4.23.36</ecNumber>
    </recommendedName>
    <alternativeName>
        <fullName evidence="1">Prolipoprotein signal peptidase</fullName>
    </alternativeName>
    <alternativeName>
        <fullName evidence="1">Signal peptidase II</fullName>
        <shortName evidence="1">SPase II</shortName>
    </alternativeName>
</protein>
<organism>
    <name type="scientific">Campylobacter jejuni subsp. jejuni serotype O:2 (strain ATCC 700819 / NCTC 11168)</name>
    <dbReference type="NCBI Taxonomy" id="192222"/>
    <lineage>
        <taxon>Bacteria</taxon>
        <taxon>Pseudomonadati</taxon>
        <taxon>Campylobacterota</taxon>
        <taxon>Epsilonproteobacteria</taxon>
        <taxon>Campylobacterales</taxon>
        <taxon>Campylobacteraceae</taxon>
        <taxon>Campylobacter</taxon>
    </lineage>
</organism>
<comment type="function">
    <text evidence="1">This protein specifically catalyzes the removal of signal peptides from prolipoproteins.</text>
</comment>
<comment type="catalytic activity">
    <reaction evidence="1">
        <text>Release of signal peptides from bacterial membrane prolipoproteins. Hydrolyzes -Xaa-Yaa-Zaa-|-(S,diacylglyceryl)Cys-, in which Xaa is hydrophobic (preferably Leu), and Yaa (Ala or Ser) and Zaa (Gly or Ala) have small, neutral side chains.</text>
        <dbReference type="EC" id="3.4.23.36"/>
    </reaction>
</comment>
<comment type="pathway">
    <text evidence="1">Protein modification; lipoprotein biosynthesis (signal peptide cleavage).</text>
</comment>
<comment type="subcellular location">
    <subcellularLocation>
        <location evidence="1">Cell inner membrane</location>
        <topology evidence="1">Multi-pass membrane protein</topology>
    </subcellularLocation>
</comment>
<comment type="similarity">
    <text evidence="1">Belongs to the peptidase A8 family.</text>
</comment>
<proteinExistence type="inferred from homology"/>
<reference key="1">
    <citation type="journal article" date="2000" name="Nature">
        <title>The genome sequence of the food-borne pathogen Campylobacter jejuni reveals hypervariable sequences.</title>
        <authorList>
            <person name="Parkhill J."/>
            <person name="Wren B.W."/>
            <person name="Mungall K.L."/>
            <person name="Ketley J.M."/>
            <person name="Churcher C.M."/>
            <person name="Basham D."/>
            <person name="Chillingworth T."/>
            <person name="Davies R.M."/>
            <person name="Feltwell T."/>
            <person name="Holroyd S."/>
            <person name="Jagels K."/>
            <person name="Karlyshev A.V."/>
            <person name="Moule S."/>
            <person name="Pallen M.J."/>
            <person name="Penn C.W."/>
            <person name="Quail M.A."/>
            <person name="Rajandream M.A."/>
            <person name="Rutherford K.M."/>
            <person name="van Vliet A.H.M."/>
            <person name="Whitehead S."/>
            <person name="Barrell B.G."/>
        </authorList>
    </citation>
    <scope>NUCLEOTIDE SEQUENCE [LARGE SCALE GENOMIC DNA]</scope>
    <source>
        <strain>ATCC 700819 / NCTC 11168</strain>
    </source>
</reference>